<reference key="1">
    <citation type="journal article" date="2001" name="Plant Physiol.">
        <title>Identification and analysis of a gene from Calendula officinalis encoding a fatty acid conjugase.</title>
        <authorList>
            <person name="Qiu X."/>
            <person name="Reed D.W."/>
            <person name="Hong H."/>
            <person name="MacKenzie S.L."/>
            <person name="Covello P.S."/>
        </authorList>
    </citation>
    <scope>NUCLEOTIDE SEQUENCE [MRNA]</scope>
    <scope>TISSUE SPECIFICITY</scope>
</reference>
<dbReference type="EC" id="1.14.19.-" evidence="5"/>
<dbReference type="EMBL" id="AF343065">
    <property type="protein sequence ID" value="AAK26633.1"/>
    <property type="molecule type" value="mRNA"/>
</dbReference>
<dbReference type="SMR" id="Q9AT72"/>
<dbReference type="UniPathway" id="UPA00658"/>
<dbReference type="GO" id="GO:0016020">
    <property type="term" value="C:membrane"/>
    <property type="evidence" value="ECO:0007669"/>
    <property type="project" value="UniProtKB-SubCell"/>
</dbReference>
<dbReference type="GO" id="GO:0016717">
    <property type="term" value="F:oxidoreductase activity, acting on paired donors, with oxidation of a pair of donors resulting in the reduction of molecular oxygen to two molecules of water"/>
    <property type="evidence" value="ECO:0000314"/>
    <property type="project" value="UniProtKB"/>
</dbReference>
<dbReference type="GO" id="GO:0006636">
    <property type="term" value="P:unsaturated fatty acid biosynthetic process"/>
    <property type="evidence" value="ECO:0000314"/>
    <property type="project" value="UniProtKB"/>
</dbReference>
<dbReference type="CDD" id="cd03507">
    <property type="entry name" value="Delta12-FADS-like"/>
    <property type="match status" value="1"/>
</dbReference>
<dbReference type="InterPro" id="IPR005804">
    <property type="entry name" value="FA_desaturase_dom"/>
</dbReference>
<dbReference type="InterPro" id="IPR021863">
    <property type="entry name" value="FAS_N"/>
</dbReference>
<dbReference type="InterPro" id="IPR012171">
    <property type="entry name" value="Fatty_acid_desaturase"/>
</dbReference>
<dbReference type="PANTHER" id="PTHR32100">
    <property type="entry name" value="OMEGA-6 FATTY ACID DESATURASE, CHLOROPLASTIC"/>
    <property type="match status" value="1"/>
</dbReference>
<dbReference type="Pfam" id="PF11960">
    <property type="entry name" value="DUF3474"/>
    <property type="match status" value="1"/>
</dbReference>
<dbReference type="Pfam" id="PF00487">
    <property type="entry name" value="FA_desaturase"/>
    <property type="match status" value="1"/>
</dbReference>
<accession>Q9AT72</accession>
<gene>
    <name evidence="4" type="primary">FAD2</name>
</gene>
<protein>
    <recommendedName>
        <fullName evidence="4">Delta(12) fatty acid desaturase FAD2</fullName>
        <shortName evidence="4">CoFad2</shortName>
        <ecNumber evidence="5">1.14.19.-</ecNumber>
    </recommendedName>
</protein>
<evidence type="ECO:0000255" key="1"/>
<evidence type="ECO:0000256" key="2">
    <source>
        <dbReference type="SAM" id="MobiDB-lite"/>
    </source>
</evidence>
<evidence type="ECO:0000269" key="3">
    <source>
    </source>
</evidence>
<evidence type="ECO:0000303" key="4">
    <source>
    </source>
</evidence>
<evidence type="ECO:0000305" key="5"/>
<evidence type="ECO:0000312" key="6">
    <source>
        <dbReference type="EMBL" id="AAK26633.1"/>
    </source>
</evidence>
<proteinExistence type="evidence at transcript level"/>
<name>FAD2_CALOF</name>
<organism evidence="6">
    <name type="scientific">Calendula officinalis</name>
    <name type="common">Pot marigold</name>
    <dbReference type="NCBI Taxonomy" id="41496"/>
    <lineage>
        <taxon>Eukaryota</taxon>
        <taxon>Viridiplantae</taxon>
        <taxon>Streptophyta</taxon>
        <taxon>Embryophyta</taxon>
        <taxon>Tracheophyta</taxon>
        <taxon>Spermatophyta</taxon>
        <taxon>Magnoliopsida</taxon>
        <taxon>eudicotyledons</taxon>
        <taxon>Gunneridae</taxon>
        <taxon>Pentapetalae</taxon>
        <taxon>asterids</taxon>
        <taxon>campanulids</taxon>
        <taxon>Asterales</taxon>
        <taxon>Asteraceae</taxon>
        <taxon>Asteroideae</taxon>
        <taxon>Calenduleae</taxon>
        <taxon>Calendula</taxon>
    </lineage>
</organism>
<comment type="function">
    <text evidence="3">Catalyzes the desaturation of oleic acid to linoleic acid. Introduces a double bond at position 12 of 16:1(9Z) and 18:1(9Z).</text>
</comment>
<comment type="pathway">
    <text>Lipid metabolism; polyunsaturated fatty acid biosynthesis.</text>
</comment>
<comment type="subcellular location">
    <subcellularLocation>
        <location evidence="1">Membrane</location>
        <topology evidence="1">Multi-pass membrane protein</topology>
    </subcellularLocation>
</comment>
<comment type="tissue specificity">
    <text>Expressed in leaves, flower buds and developing seeds.</text>
</comment>
<comment type="domain">
    <text evidence="5">The histidine box domains may contain the active site and/or be involved in metal ion binding.</text>
</comment>
<comment type="similarity">
    <text evidence="5">Belongs to the fatty acid desaturase type 1 family.</text>
</comment>
<sequence>MGAGGRMQDPTNGGNKTEPEPIQRVPHEKPPFTVGDIKKAIPPHCFNRSVIRSFSYVFYDLTIASILYYIANNYISTLPSPLAYVAWPVYWAVQGCVLTGVWVIAHECGHHAFSDHQWLDDTVGLVLHSFLLVPYFSWKYSHRRHHSNTGSIEHDEVFVPKLKSGVRSTARYLNNPPGRILTLLVTLTLGWPLYLTFNVSGRYYDRFACHFDPNSPIYSKRERAQIFISDAGILAVVFVLFRLAMTKGLTWVLTMYGGPLLVVNGFLVLITFLQHTHPSLPHYDSTEWDWLRGALTTIDRDYGILNKVFHNITDTHVAHHLFSTMPHYHAMEATKVIKPILGDYYQFDGTSIFKAMYRETKECIYVDKDEEVKDGVYWYRNKI</sequence>
<feature type="chain" id="PRO_0000435420" description="Delta(12) fatty acid desaturase FAD2">
    <location>
        <begin position="1"/>
        <end position="383"/>
    </location>
</feature>
<feature type="transmembrane region" description="Helical" evidence="1">
    <location>
        <begin position="50"/>
        <end position="70"/>
    </location>
</feature>
<feature type="transmembrane region" description="Helical" evidence="1">
    <location>
        <begin position="85"/>
        <end position="105"/>
    </location>
</feature>
<feature type="transmembrane region" description="Helical" evidence="1">
    <location>
        <begin position="118"/>
        <end position="138"/>
    </location>
</feature>
<feature type="transmembrane region" description="Helical" evidence="1">
    <location>
        <begin position="180"/>
        <end position="200"/>
    </location>
</feature>
<feature type="transmembrane region" description="Helical" evidence="1">
    <location>
        <begin position="226"/>
        <end position="246"/>
    </location>
</feature>
<feature type="transmembrane region" description="Helical" evidence="1">
    <location>
        <begin position="252"/>
        <end position="272"/>
    </location>
</feature>
<feature type="region of interest" description="Disordered" evidence="2">
    <location>
        <begin position="1"/>
        <end position="29"/>
    </location>
</feature>
<feature type="short sequence motif" description="Histidine box-1" evidence="5">
    <location>
        <begin position="106"/>
        <end position="110"/>
    </location>
</feature>
<feature type="short sequence motif" description="Histidine box-2" evidence="5">
    <location>
        <begin position="142"/>
        <end position="146"/>
    </location>
</feature>
<feature type="short sequence motif" description="Histidine box-3" evidence="5">
    <location>
        <begin position="316"/>
        <end position="320"/>
    </location>
</feature>
<feature type="compositionally biased region" description="Basic and acidic residues" evidence="2">
    <location>
        <begin position="17"/>
        <end position="29"/>
    </location>
</feature>
<keyword id="KW-0275">Fatty acid biosynthesis</keyword>
<keyword id="KW-0276">Fatty acid metabolism</keyword>
<keyword id="KW-0444">Lipid biosynthesis</keyword>
<keyword id="KW-0443">Lipid metabolism</keyword>
<keyword id="KW-0472">Membrane</keyword>
<keyword id="KW-0560">Oxidoreductase</keyword>
<keyword id="KW-0812">Transmembrane</keyword>
<keyword id="KW-1133">Transmembrane helix</keyword>